<keyword id="KW-0067">ATP-binding</keyword>
<keyword id="KW-0963">Cytoplasm</keyword>
<keyword id="KW-0210">Decarboxylase</keyword>
<keyword id="KW-0312">Gluconeogenesis</keyword>
<keyword id="KW-0456">Lyase</keyword>
<keyword id="KW-0464">Manganese</keyword>
<keyword id="KW-0479">Metal-binding</keyword>
<keyword id="KW-0547">Nucleotide-binding</keyword>
<keyword id="KW-1185">Reference proteome</keyword>
<sequence>MTHGRVNPDFRLEDQGITGLGTVYYNLIEPDLIQYALARGEGSLGKGGSFLVTTGKFTGRSPKDKHVVKTDSVADTIWWENNREMSPEGFDQLYTDMLAHMEGRDYFVEDLTGGSDPKHAINVRMVTELAWHGLFIRHMLRRPDREDLDDFIADFTVINCPSFQADPAKHNCRSETVIAMNFDKKLILIGGTEYAGENKKSVFTLLNYLLPEKGVMPMHCSANHAVGNPVDTAVFFGLSGTGKTTLSADPARTLIGDDEHGWSDTGTFNFEGGCYAKTISLNPEAEPEIYATTEKFGTVIENMVYDAETKDLDFEDDSLTANMRCAYPLHYISNASQAARGGHPKNIIMLTCDAFGVLPPISRLTPAQAMYHFLSGFTSKVAGTERGVTEPEPTFSTCFGAPFMPRRPEVYGNLLREKIATHGATCWLVNTGWTGGAYGTGSRMPIKATRGLLTAALDGSLADAEFRKDPNFGFQVPVDVTGVPGILLDPRRTWDDAEAYDRQAAKLVKMFSDNFEQYLPFIDEDVRAAAIS</sequence>
<evidence type="ECO:0000255" key="1">
    <source>
        <dbReference type="HAMAP-Rule" id="MF_00453"/>
    </source>
</evidence>
<accession>Q16AH6</accession>
<protein>
    <recommendedName>
        <fullName evidence="1">Phosphoenolpyruvate carboxykinase (ATP)</fullName>
        <shortName evidence="1">PCK</shortName>
        <shortName evidence="1">PEP carboxykinase</shortName>
        <shortName evidence="1">PEPCK</shortName>
        <ecNumber evidence="1">4.1.1.49</ecNumber>
    </recommendedName>
</protein>
<proteinExistence type="inferred from homology"/>
<gene>
    <name evidence="1" type="primary">pckA</name>
    <name type="ordered locus">RD1_1376</name>
</gene>
<reference key="1">
    <citation type="journal article" date="2007" name="J. Bacteriol.">
        <title>The complete genome sequence of Roseobacter denitrificans reveals a mixotrophic rather than photosynthetic metabolism.</title>
        <authorList>
            <person name="Swingley W.D."/>
            <person name="Sadekar S."/>
            <person name="Mastrian S.D."/>
            <person name="Matthies H.J."/>
            <person name="Hao J."/>
            <person name="Ramos H."/>
            <person name="Acharya C.R."/>
            <person name="Conrad A.L."/>
            <person name="Taylor H.L."/>
            <person name="Dejesa L.C."/>
            <person name="Shah M.K."/>
            <person name="O'Huallachain M.E."/>
            <person name="Lince M.T."/>
            <person name="Blankenship R.E."/>
            <person name="Beatty J.T."/>
            <person name="Touchman J.W."/>
        </authorList>
    </citation>
    <scope>NUCLEOTIDE SEQUENCE [LARGE SCALE GENOMIC DNA]</scope>
    <source>
        <strain>ATCC 33942 / OCh 114</strain>
    </source>
</reference>
<organism>
    <name type="scientific">Roseobacter denitrificans (strain ATCC 33942 / OCh 114)</name>
    <name type="common">Erythrobacter sp. (strain OCh 114)</name>
    <name type="synonym">Roseobacter denitrificans</name>
    <dbReference type="NCBI Taxonomy" id="375451"/>
    <lineage>
        <taxon>Bacteria</taxon>
        <taxon>Pseudomonadati</taxon>
        <taxon>Pseudomonadota</taxon>
        <taxon>Alphaproteobacteria</taxon>
        <taxon>Rhodobacterales</taxon>
        <taxon>Roseobacteraceae</taxon>
        <taxon>Roseobacter</taxon>
    </lineage>
</organism>
<comment type="function">
    <text evidence="1">Involved in the gluconeogenesis. Catalyzes the conversion of oxaloacetate (OAA) to phosphoenolpyruvate (PEP) through direct phosphoryl transfer between the nucleoside triphosphate and OAA.</text>
</comment>
<comment type="catalytic activity">
    <reaction evidence="1">
        <text>oxaloacetate + ATP = phosphoenolpyruvate + ADP + CO2</text>
        <dbReference type="Rhea" id="RHEA:18617"/>
        <dbReference type="ChEBI" id="CHEBI:16452"/>
        <dbReference type="ChEBI" id="CHEBI:16526"/>
        <dbReference type="ChEBI" id="CHEBI:30616"/>
        <dbReference type="ChEBI" id="CHEBI:58702"/>
        <dbReference type="ChEBI" id="CHEBI:456216"/>
        <dbReference type="EC" id="4.1.1.49"/>
    </reaction>
</comment>
<comment type="cofactor">
    <cofactor evidence="1">
        <name>Mn(2+)</name>
        <dbReference type="ChEBI" id="CHEBI:29035"/>
    </cofactor>
    <text evidence="1">Binds 1 Mn(2+) ion per subunit.</text>
</comment>
<comment type="pathway">
    <text evidence="1">Carbohydrate biosynthesis; gluconeogenesis.</text>
</comment>
<comment type="subcellular location">
    <subcellularLocation>
        <location evidence="1">Cytoplasm</location>
    </subcellularLocation>
</comment>
<comment type="similarity">
    <text evidence="1">Belongs to the phosphoenolpyruvate carboxykinase (ATP) family.</text>
</comment>
<feature type="chain" id="PRO_1000026348" description="Phosphoenolpyruvate carboxykinase (ATP)">
    <location>
        <begin position="1"/>
        <end position="532"/>
    </location>
</feature>
<feature type="binding site" evidence="1">
    <location>
        <position position="60"/>
    </location>
    <ligand>
        <name>substrate</name>
    </ligand>
</feature>
<feature type="binding site" evidence="1">
    <location>
        <position position="194"/>
    </location>
    <ligand>
        <name>substrate</name>
    </ligand>
</feature>
<feature type="binding site" evidence="1">
    <location>
        <position position="200"/>
    </location>
    <ligand>
        <name>ATP</name>
        <dbReference type="ChEBI" id="CHEBI:30616"/>
    </ligand>
</feature>
<feature type="binding site" evidence="1">
    <location>
        <position position="200"/>
    </location>
    <ligand>
        <name>Mn(2+)</name>
        <dbReference type="ChEBI" id="CHEBI:29035"/>
    </ligand>
</feature>
<feature type="binding site" evidence="1">
    <location>
        <position position="200"/>
    </location>
    <ligand>
        <name>substrate</name>
    </ligand>
</feature>
<feature type="binding site" evidence="1">
    <location>
        <position position="219"/>
    </location>
    <ligand>
        <name>ATP</name>
        <dbReference type="ChEBI" id="CHEBI:30616"/>
    </ligand>
</feature>
<feature type="binding site" evidence="1">
    <location>
        <position position="219"/>
    </location>
    <ligand>
        <name>Mn(2+)</name>
        <dbReference type="ChEBI" id="CHEBI:29035"/>
    </ligand>
</feature>
<feature type="binding site" evidence="1">
    <location>
        <begin position="237"/>
        <end position="245"/>
    </location>
    <ligand>
        <name>ATP</name>
        <dbReference type="ChEBI" id="CHEBI:30616"/>
    </ligand>
</feature>
<feature type="binding site" evidence="1">
    <location>
        <position position="258"/>
    </location>
    <ligand>
        <name>Mn(2+)</name>
        <dbReference type="ChEBI" id="CHEBI:29035"/>
    </ligand>
</feature>
<feature type="binding site" evidence="1">
    <location>
        <position position="286"/>
    </location>
    <ligand>
        <name>ATP</name>
        <dbReference type="ChEBI" id="CHEBI:30616"/>
    </ligand>
</feature>
<feature type="binding site" evidence="1">
    <location>
        <position position="324"/>
    </location>
    <ligand>
        <name>ATP</name>
        <dbReference type="ChEBI" id="CHEBI:30616"/>
    </ligand>
</feature>
<feature type="binding site" evidence="1">
    <location>
        <position position="324"/>
    </location>
    <ligand>
        <name>substrate</name>
    </ligand>
</feature>
<feature type="binding site" evidence="1">
    <location>
        <position position="449"/>
    </location>
    <ligand>
        <name>ATP</name>
        <dbReference type="ChEBI" id="CHEBI:30616"/>
    </ligand>
</feature>
<name>PCKA_ROSDO</name>
<dbReference type="EC" id="4.1.1.49" evidence="1"/>
<dbReference type="EMBL" id="CP000362">
    <property type="protein sequence ID" value="ABG31017.1"/>
    <property type="molecule type" value="Genomic_DNA"/>
</dbReference>
<dbReference type="RefSeq" id="WP_011567637.1">
    <property type="nucleotide sequence ID" value="NC_008209.1"/>
</dbReference>
<dbReference type="SMR" id="Q16AH6"/>
<dbReference type="STRING" id="375451.RD1_1376"/>
<dbReference type="KEGG" id="rde:RD1_1376"/>
<dbReference type="eggNOG" id="COG1866">
    <property type="taxonomic scope" value="Bacteria"/>
</dbReference>
<dbReference type="HOGENOM" id="CLU_018247_0_1_5"/>
<dbReference type="OrthoDB" id="9806325at2"/>
<dbReference type="UniPathway" id="UPA00138"/>
<dbReference type="Proteomes" id="UP000007029">
    <property type="component" value="Chromosome"/>
</dbReference>
<dbReference type="GO" id="GO:0005829">
    <property type="term" value="C:cytosol"/>
    <property type="evidence" value="ECO:0007669"/>
    <property type="project" value="TreeGrafter"/>
</dbReference>
<dbReference type="GO" id="GO:0005524">
    <property type="term" value="F:ATP binding"/>
    <property type="evidence" value="ECO:0007669"/>
    <property type="project" value="UniProtKB-UniRule"/>
</dbReference>
<dbReference type="GO" id="GO:0046872">
    <property type="term" value="F:metal ion binding"/>
    <property type="evidence" value="ECO:0007669"/>
    <property type="project" value="UniProtKB-KW"/>
</dbReference>
<dbReference type="GO" id="GO:0004612">
    <property type="term" value="F:phosphoenolpyruvate carboxykinase (ATP) activity"/>
    <property type="evidence" value="ECO:0007669"/>
    <property type="project" value="UniProtKB-UniRule"/>
</dbReference>
<dbReference type="GO" id="GO:0006094">
    <property type="term" value="P:gluconeogenesis"/>
    <property type="evidence" value="ECO:0007669"/>
    <property type="project" value="UniProtKB-UniRule"/>
</dbReference>
<dbReference type="CDD" id="cd00484">
    <property type="entry name" value="PEPCK_ATP"/>
    <property type="match status" value="1"/>
</dbReference>
<dbReference type="Gene3D" id="3.90.228.20">
    <property type="match status" value="1"/>
</dbReference>
<dbReference type="Gene3D" id="3.40.449.10">
    <property type="entry name" value="Phosphoenolpyruvate Carboxykinase, domain 1"/>
    <property type="match status" value="1"/>
</dbReference>
<dbReference type="Gene3D" id="2.170.8.10">
    <property type="entry name" value="Phosphoenolpyruvate Carboxykinase, domain 2"/>
    <property type="match status" value="1"/>
</dbReference>
<dbReference type="HAMAP" id="MF_00453">
    <property type="entry name" value="PEPCK_ATP"/>
    <property type="match status" value="1"/>
</dbReference>
<dbReference type="InterPro" id="IPR001272">
    <property type="entry name" value="PEP_carboxykinase_ATP"/>
</dbReference>
<dbReference type="InterPro" id="IPR013035">
    <property type="entry name" value="PEP_carboxykinase_C"/>
</dbReference>
<dbReference type="InterPro" id="IPR008210">
    <property type="entry name" value="PEP_carboxykinase_N"/>
</dbReference>
<dbReference type="NCBIfam" id="TIGR00224">
    <property type="entry name" value="pckA"/>
    <property type="match status" value="1"/>
</dbReference>
<dbReference type="NCBIfam" id="NF006820">
    <property type="entry name" value="PRK09344.1-2"/>
    <property type="match status" value="1"/>
</dbReference>
<dbReference type="NCBIfam" id="NF006821">
    <property type="entry name" value="PRK09344.1-3"/>
    <property type="match status" value="1"/>
</dbReference>
<dbReference type="NCBIfam" id="NF006822">
    <property type="entry name" value="PRK09344.1-4"/>
    <property type="match status" value="1"/>
</dbReference>
<dbReference type="PANTHER" id="PTHR30031:SF0">
    <property type="entry name" value="PHOSPHOENOLPYRUVATE CARBOXYKINASE (ATP)"/>
    <property type="match status" value="1"/>
</dbReference>
<dbReference type="PANTHER" id="PTHR30031">
    <property type="entry name" value="PHOSPHOENOLPYRUVATE CARBOXYKINASE ATP"/>
    <property type="match status" value="1"/>
</dbReference>
<dbReference type="Pfam" id="PF01293">
    <property type="entry name" value="PEPCK_ATP"/>
    <property type="match status" value="1"/>
</dbReference>
<dbReference type="PIRSF" id="PIRSF006294">
    <property type="entry name" value="PEP_crbxkin"/>
    <property type="match status" value="1"/>
</dbReference>
<dbReference type="SUPFAM" id="SSF68923">
    <property type="entry name" value="PEP carboxykinase N-terminal domain"/>
    <property type="match status" value="1"/>
</dbReference>
<dbReference type="SUPFAM" id="SSF53795">
    <property type="entry name" value="PEP carboxykinase-like"/>
    <property type="match status" value="1"/>
</dbReference>